<comment type="catalytic activity">
    <reaction evidence="1">
        <text>(6R)-10-formyltetrahydrofolate + 5-amino-1-(5-phospho-beta-D-ribosyl)imidazole-4-carboxamide = 5-formamido-1-(5-phospho-D-ribosyl)imidazole-4-carboxamide + (6S)-5,6,7,8-tetrahydrofolate</text>
        <dbReference type="Rhea" id="RHEA:22192"/>
        <dbReference type="ChEBI" id="CHEBI:57453"/>
        <dbReference type="ChEBI" id="CHEBI:58467"/>
        <dbReference type="ChEBI" id="CHEBI:58475"/>
        <dbReference type="ChEBI" id="CHEBI:195366"/>
        <dbReference type="EC" id="2.1.2.3"/>
    </reaction>
</comment>
<comment type="catalytic activity">
    <reaction evidence="1">
        <text>IMP + H2O = 5-formamido-1-(5-phospho-D-ribosyl)imidazole-4-carboxamide</text>
        <dbReference type="Rhea" id="RHEA:18445"/>
        <dbReference type="ChEBI" id="CHEBI:15377"/>
        <dbReference type="ChEBI" id="CHEBI:58053"/>
        <dbReference type="ChEBI" id="CHEBI:58467"/>
        <dbReference type="EC" id="3.5.4.10"/>
    </reaction>
</comment>
<comment type="pathway">
    <text evidence="1">Purine metabolism; IMP biosynthesis via de novo pathway; 5-formamido-1-(5-phospho-D-ribosyl)imidazole-4-carboxamide from 5-amino-1-(5-phospho-D-ribosyl)imidazole-4-carboxamide (10-formyl THF route): step 1/1.</text>
</comment>
<comment type="pathway">
    <text evidence="1">Purine metabolism; IMP biosynthesis via de novo pathway; IMP from 5-formamido-1-(5-phospho-D-ribosyl)imidazole-4-carboxamide: step 1/1.</text>
</comment>
<comment type="domain">
    <text evidence="1">The IMP cyclohydrolase activity resides in the N-terminal region.</text>
</comment>
<comment type="similarity">
    <text evidence="1">Belongs to the PurH family.</text>
</comment>
<name>PUR9_GEOSL</name>
<protein>
    <recommendedName>
        <fullName evidence="1">Bifunctional purine biosynthesis protein PurH</fullName>
    </recommendedName>
    <domain>
        <recommendedName>
            <fullName evidence="1">Phosphoribosylaminoimidazolecarboxamide formyltransferase</fullName>
            <ecNumber evidence="1">2.1.2.3</ecNumber>
        </recommendedName>
        <alternativeName>
            <fullName evidence="1">AICAR transformylase</fullName>
        </alternativeName>
    </domain>
    <domain>
        <recommendedName>
            <fullName evidence="1">IMP cyclohydrolase</fullName>
            <ecNumber evidence="1">3.5.4.10</ecNumber>
        </recommendedName>
        <alternativeName>
            <fullName evidence="1">ATIC</fullName>
        </alternativeName>
        <alternativeName>
            <fullName evidence="1">IMP synthase</fullName>
        </alternativeName>
        <alternativeName>
            <fullName evidence="1">Inosinicase</fullName>
        </alternativeName>
    </domain>
</protein>
<dbReference type="EC" id="2.1.2.3" evidence="1"/>
<dbReference type="EC" id="3.5.4.10" evidence="1"/>
<dbReference type="EMBL" id="AE017180">
    <property type="protein sequence ID" value="AAR33940.1"/>
    <property type="molecule type" value="Genomic_DNA"/>
</dbReference>
<dbReference type="RefSeq" id="NP_951667.1">
    <property type="nucleotide sequence ID" value="NC_002939.5"/>
</dbReference>
<dbReference type="RefSeq" id="WP_010941271.1">
    <property type="nucleotide sequence ID" value="NC_002939.5"/>
</dbReference>
<dbReference type="SMR" id="Q74FJ9"/>
<dbReference type="FunCoup" id="Q74FJ9">
    <property type="interactions" value="516"/>
</dbReference>
<dbReference type="STRING" id="243231.GSU0609"/>
<dbReference type="EnsemblBacteria" id="AAR33940">
    <property type="protein sequence ID" value="AAR33940"/>
    <property type="gene ID" value="GSU0609"/>
</dbReference>
<dbReference type="KEGG" id="gsu:GSU0609"/>
<dbReference type="PATRIC" id="fig|243231.5.peg.608"/>
<dbReference type="eggNOG" id="COG0138">
    <property type="taxonomic scope" value="Bacteria"/>
</dbReference>
<dbReference type="HOGENOM" id="CLU_016316_5_2_7"/>
<dbReference type="InParanoid" id="Q74FJ9"/>
<dbReference type="OrthoDB" id="9802065at2"/>
<dbReference type="UniPathway" id="UPA00074">
    <property type="reaction ID" value="UER00133"/>
</dbReference>
<dbReference type="UniPathway" id="UPA00074">
    <property type="reaction ID" value="UER00135"/>
</dbReference>
<dbReference type="Proteomes" id="UP000000577">
    <property type="component" value="Chromosome"/>
</dbReference>
<dbReference type="GO" id="GO:0005829">
    <property type="term" value="C:cytosol"/>
    <property type="evidence" value="ECO:0000318"/>
    <property type="project" value="GO_Central"/>
</dbReference>
<dbReference type="GO" id="GO:0003937">
    <property type="term" value="F:IMP cyclohydrolase activity"/>
    <property type="evidence" value="ECO:0000318"/>
    <property type="project" value="GO_Central"/>
</dbReference>
<dbReference type="GO" id="GO:0004643">
    <property type="term" value="F:phosphoribosylaminoimidazolecarboxamide formyltransferase activity"/>
    <property type="evidence" value="ECO:0000318"/>
    <property type="project" value="GO_Central"/>
</dbReference>
<dbReference type="GO" id="GO:0006189">
    <property type="term" value="P:'de novo' IMP biosynthetic process"/>
    <property type="evidence" value="ECO:0000318"/>
    <property type="project" value="GO_Central"/>
</dbReference>
<dbReference type="CDD" id="cd01421">
    <property type="entry name" value="IMPCH"/>
    <property type="match status" value="1"/>
</dbReference>
<dbReference type="FunFam" id="3.40.140.20:FF:000001">
    <property type="entry name" value="Bifunctional purine biosynthesis protein PurH"/>
    <property type="match status" value="1"/>
</dbReference>
<dbReference type="FunFam" id="3.40.140.20:FF:000002">
    <property type="entry name" value="Bifunctional purine biosynthesis protein PurH"/>
    <property type="match status" value="1"/>
</dbReference>
<dbReference type="FunFam" id="3.40.50.1380:FF:000001">
    <property type="entry name" value="Bifunctional purine biosynthesis protein PurH"/>
    <property type="match status" value="1"/>
</dbReference>
<dbReference type="Gene3D" id="3.40.140.20">
    <property type="match status" value="2"/>
</dbReference>
<dbReference type="Gene3D" id="3.40.50.1380">
    <property type="entry name" value="Methylglyoxal synthase-like domain"/>
    <property type="match status" value="1"/>
</dbReference>
<dbReference type="HAMAP" id="MF_00139">
    <property type="entry name" value="PurH"/>
    <property type="match status" value="1"/>
</dbReference>
<dbReference type="InterPro" id="IPR024051">
    <property type="entry name" value="AICAR_Tfase_dup_dom_sf"/>
</dbReference>
<dbReference type="InterPro" id="IPR016193">
    <property type="entry name" value="Cytidine_deaminase-like"/>
</dbReference>
<dbReference type="InterPro" id="IPR011607">
    <property type="entry name" value="MGS-like_dom"/>
</dbReference>
<dbReference type="InterPro" id="IPR036914">
    <property type="entry name" value="MGS-like_dom_sf"/>
</dbReference>
<dbReference type="InterPro" id="IPR002695">
    <property type="entry name" value="PurH-like"/>
</dbReference>
<dbReference type="NCBIfam" id="NF002049">
    <property type="entry name" value="PRK00881.1"/>
    <property type="match status" value="1"/>
</dbReference>
<dbReference type="NCBIfam" id="TIGR00355">
    <property type="entry name" value="purH"/>
    <property type="match status" value="1"/>
</dbReference>
<dbReference type="PANTHER" id="PTHR11692:SF0">
    <property type="entry name" value="BIFUNCTIONAL PURINE BIOSYNTHESIS PROTEIN ATIC"/>
    <property type="match status" value="1"/>
</dbReference>
<dbReference type="PANTHER" id="PTHR11692">
    <property type="entry name" value="BIFUNCTIONAL PURINE BIOSYNTHESIS PROTEIN PURH"/>
    <property type="match status" value="1"/>
</dbReference>
<dbReference type="Pfam" id="PF01808">
    <property type="entry name" value="AICARFT_IMPCHas"/>
    <property type="match status" value="1"/>
</dbReference>
<dbReference type="Pfam" id="PF02142">
    <property type="entry name" value="MGS"/>
    <property type="match status" value="1"/>
</dbReference>
<dbReference type="PIRSF" id="PIRSF000414">
    <property type="entry name" value="AICARFT_IMPCHas"/>
    <property type="match status" value="1"/>
</dbReference>
<dbReference type="SMART" id="SM00798">
    <property type="entry name" value="AICARFT_IMPCHas"/>
    <property type="match status" value="1"/>
</dbReference>
<dbReference type="SMART" id="SM00851">
    <property type="entry name" value="MGS"/>
    <property type="match status" value="1"/>
</dbReference>
<dbReference type="SUPFAM" id="SSF53927">
    <property type="entry name" value="Cytidine deaminase-like"/>
    <property type="match status" value="1"/>
</dbReference>
<dbReference type="SUPFAM" id="SSF52335">
    <property type="entry name" value="Methylglyoxal synthase-like"/>
    <property type="match status" value="1"/>
</dbReference>
<dbReference type="PROSITE" id="PS51855">
    <property type="entry name" value="MGS"/>
    <property type="match status" value="1"/>
</dbReference>
<feature type="chain" id="PRO_1000057897" description="Bifunctional purine biosynthesis protein PurH">
    <location>
        <begin position="1"/>
        <end position="521"/>
    </location>
</feature>
<feature type="domain" description="MGS-like" evidence="2">
    <location>
        <begin position="1"/>
        <end position="147"/>
    </location>
</feature>
<accession>Q74FJ9</accession>
<organism>
    <name type="scientific">Geobacter sulfurreducens (strain ATCC 51573 / DSM 12127 / PCA)</name>
    <dbReference type="NCBI Taxonomy" id="243231"/>
    <lineage>
        <taxon>Bacteria</taxon>
        <taxon>Pseudomonadati</taxon>
        <taxon>Thermodesulfobacteriota</taxon>
        <taxon>Desulfuromonadia</taxon>
        <taxon>Geobacterales</taxon>
        <taxon>Geobacteraceae</taxon>
        <taxon>Geobacter</taxon>
    </lineage>
</organism>
<evidence type="ECO:0000255" key="1">
    <source>
        <dbReference type="HAMAP-Rule" id="MF_00139"/>
    </source>
</evidence>
<evidence type="ECO:0000255" key="2">
    <source>
        <dbReference type="PROSITE-ProRule" id="PRU01202"/>
    </source>
</evidence>
<gene>
    <name evidence="1" type="primary">purH</name>
    <name type="ordered locus">GSU0609</name>
</gene>
<keyword id="KW-0378">Hydrolase</keyword>
<keyword id="KW-0511">Multifunctional enzyme</keyword>
<keyword id="KW-0658">Purine biosynthesis</keyword>
<keyword id="KW-1185">Reference proteome</keyword>
<keyword id="KW-0808">Transferase</keyword>
<proteinExistence type="inferred from homology"/>
<reference key="1">
    <citation type="journal article" date="2003" name="Science">
        <title>Genome of Geobacter sulfurreducens: metal reduction in subsurface environments.</title>
        <authorList>
            <person name="Methe B.A."/>
            <person name="Nelson K.E."/>
            <person name="Eisen J.A."/>
            <person name="Paulsen I.T."/>
            <person name="Nelson W.C."/>
            <person name="Heidelberg J.F."/>
            <person name="Wu D."/>
            <person name="Wu M."/>
            <person name="Ward N.L."/>
            <person name="Beanan M.J."/>
            <person name="Dodson R.J."/>
            <person name="Madupu R."/>
            <person name="Brinkac L.M."/>
            <person name="Daugherty S.C."/>
            <person name="DeBoy R.T."/>
            <person name="Durkin A.S."/>
            <person name="Gwinn M.L."/>
            <person name="Kolonay J.F."/>
            <person name="Sullivan S.A."/>
            <person name="Haft D.H."/>
            <person name="Selengut J."/>
            <person name="Davidsen T.M."/>
            <person name="Zafar N."/>
            <person name="White O."/>
            <person name="Tran B."/>
            <person name="Romero C."/>
            <person name="Forberger H.A."/>
            <person name="Weidman J.F."/>
            <person name="Khouri H.M."/>
            <person name="Feldblyum T.V."/>
            <person name="Utterback T.R."/>
            <person name="Van Aken S.E."/>
            <person name="Lovley D.R."/>
            <person name="Fraser C.M."/>
        </authorList>
    </citation>
    <scope>NUCLEOTIDE SEQUENCE [LARGE SCALE GENOMIC DNA]</scope>
    <source>
        <strain>ATCC 51573 / DSM 12127 / PCA</strain>
    </source>
</reference>
<sequence>MAKITRALISVSDKTGILDFARELAGYGVEILSTGGTAKLLRDAGLAVKDVSDFTGFPEMLDGRVKTLHPKVHGGLLGMRSNPDHVATMKAHGIEPIDLVVVNLYPFEATVAKPECTLEDAIENIDIGGPTMLRSAAKNNADVTVLVDPADYRPVLDEMKASGGAVSRETNFCLAVKVYQHTAAYDGAISNWLGARTGEGIAAYPDTVTLQFRKAQEMRYGENPHQGAAFYVERQVKEASVATARQLQGKELSYNNIADTDAALECVKQFAEGPACVIVKHANPCGVAVGGTLLEAYDRAYATDPESAFGGIIAFNRELDADTARAICDRQFVEVIIAPAVSPEATEVVAAKKNVRLLECGTWPEKQQPRLDLKRVNGGILVQDTDLDLYAELKVVTKRQPTEQEMKDLLFAWRVAKFVKSNAIVYGKGNMTIGVGAGQMSRVNSARIAAIKAEHAGLEVKGAVMASDAFFPFRDGIDNAAAVGITAVIQPGGSMRDAEVIAAADEHGMAMVFTGMRHFRH</sequence>